<organism>
    <name type="scientific">Variola virus</name>
    <dbReference type="NCBI Taxonomy" id="10255"/>
    <lineage>
        <taxon>Viruses</taxon>
        <taxon>Varidnaviria</taxon>
        <taxon>Bamfordvirae</taxon>
        <taxon>Nucleocytoviricota</taxon>
        <taxon>Pokkesviricetes</taxon>
        <taxon>Chitovirales</taxon>
        <taxon>Poxviridae</taxon>
        <taxon>Chordopoxvirinae</taxon>
        <taxon>Orthopoxvirus</taxon>
    </lineage>
</organism>
<evidence type="ECO:0000250" key="1">
    <source>
        <dbReference type="UniProtKB" id="P07611"/>
    </source>
</evidence>
<evidence type="ECO:0000255" key="2"/>
<evidence type="ECO:0000256" key="3">
    <source>
        <dbReference type="SAM" id="MobiDB-lite"/>
    </source>
</evidence>
<evidence type="ECO:0000305" key="4"/>
<accession>P0DOS8</accession>
<accession>P32998</accession>
<accession>Q76Q19</accession>
<keyword id="KW-1169">Fusion of virus membrane with host cell membrane</keyword>
<keyword id="KW-1168">Fusion of virus membrane with host membrane</keyword>
<keyword id="KW-0426">Late protein</keyword>
<keyword id="KW-0449">Lipoprotein</keyword>
<keyword id="KW-0472">Membrane</keyword>
<keyword id="KW-0519">Myristate</keyword>
<keyword id="KW-0735">Signal-anchor</keyword>
<keyword id="KW-0812">Transmembrane</keyword>
<keyword id="KW-1133">Transmembrane helix</keyword>
<keyword id="KW-0261">Viral envelope protein</keyword>
<keyword id="KW-1162">Viral penetration into host cytoplasm</keyword>
<keyword id="KW-0946">Virion</keyword>
<keyword id="KW-1160">Virus entry into host cell</keyword>
<proteinExistence type="inferred from homology"/>
<organismHost>
    <name type="scientific">Homo sapiens</name>
    <name type="common">Human</name>
    <dbReference type="NCBI Taxonomy" id="9606"/>
</organismHost>
<dbReference type="EMBL" id="L22579">
    <property type="protein sequence ID" value="AAA60820.1"/>
    <property type="molecule type" value="Genomic_DNA"/>
</dbReference>
<dbReference type="EMBL" id="X76267">
    <property type="protein sequence ID" value="CAA53877.1"/>
    <property type="molecule type" value="Genomic_DNA"/>
</dbReference>
<dbReference type="EMBL" id="Y16780">
    <property type="protein sequence ID" value="CAB54672.1"/>
    <property type="molecule type" value="Genomic_DNA"/>
</dbReference>
<dbReference type="PIR" id="F72159">
    <property type="entry name" value="F72159"/>
</dbReference>
<dbReference type="PIR" id="T28510">
    <property type="entry name" value="T28510"/>
</dbReference>
<dbReference type="RefSeq" id="NP_042116.1">
    <property type="nucleotide sequence ID" value="NC_001611.1"/>
</dbReference>
<dbReference type="SMR" id="P0DOS8"/>
<dbReference type="GeneID" id="1486438"/>
<dbReference type="KEGG" id="vg:1486438"/>
<dbReference type="Proteomes" id="UP000111493">
    <property type="component" value="Segment"/>
</dbReference>
<dbReference type="Proteomes" id="UP000119805">
    <property type="component" value="Segment"/>
</dbReference>
<dbReference type="GO" id="GO:0016020">
    <property type="term" value="C:membrane"/>
    <property type="evidence" value="ECO:0007669"/>
    <property type="project" value="UniProtKB-KW"/>
</dbReference>
<dbReference type="GO" id="GO:0019031">
    <property type="term" value="C:viral envelope"/>
    <property type="evidence" value="ECO:0007669"/>
    <property type="project" value="UniProtKB-KW"/>
</dbReference>
<dbReference type="GO" id="GO:0055036">
    <property type="term" value="C:virion membrane"/>
    <property type="evidence" value="ECO:0007669"/>
    <property type="project" value="UniProtKB-SubCell"/>
</dbReference>
<dbReference type="GO" id="GO:0019064">
    <property type="term" value="P:fusion of virus membrane with host plasma membrane"/>
    <property type="evidence" value="ECO:0007669"/>
    <property type="project" value="UniProtKB-KW"/>
</dbReference>
<dbReference type="GO" id="GO:0046718">
    <property type="term" value="P:symbiont entry into host cell"/>
    <property type="evidence" value="ECO:0007669"/>
    <property type="project" value="UniProtKB-KW"/>
</dbReference>
<dbReference type="InterPro" id="IPR004251">
    <property type="entry name" value="Pox_virus_G9/A16"/>
</dbReference>
<dbReference type="Pfam" id="PF03003">
    <property type="entry name" value="Pox_G9-A16"/>
    <property type="match status" value="1"/>
</dbReference>
<feature type="initiator methionine" description="Removed; by host" evidence="1">
    <location>
        <position position="1"/>
    </location>
</feature>
<feature type="chain" id="PRO_0000448196" description="Entry-fusion complex protein OPG094">
    <location>
        <begin position="2"/>
        <end position="340"/>
    </location>
</feature>
<feature type="topological domain" description="Virion surface">
    <location>
        <begin position="2"/>
        <end position="319"/>
    </location>
</feature>
<feature type="transmembrane region" description="Helical; Signal-anchor for type II membrane protein" evidence="2">
    <location>
        <begin position="320"/>
        <end position="340"/>
    </location>
</feature>
<feature type="region of interest" description="Disordered" evidence="3">
    <location>
        <begin position="1"/>
        <end position="20"/>
    </location>
</feature>
<feature type="lipid moiety-binding region" description="N-myristoyl glycine; by host" evidence="1">
    <location>
        <position position="2"/>
    </location>
</feature>
<comment type="function">
    <text evidence="1">Component of the entry fusion complex (EFC), which consists of 11 proteins. During cell infection, this complex mediates entry of the virion core into the host cytoplasm by a two-step mechanism consisting of lipid mixing of the viral and cellular membranes and subsequent pore formation.</text>
</comment>
<comment type="subunit">
    <text evidence="1">Interacts with OPG143. Component of the entry fusion complex (EFC) composed of OPG053, OPG076, OPG086, OPG094, OPG095, OPG099, OPG107, OPG143, OPG104, OPG147 and OPG155. Except for OPG095 and OPG053, each of the EFC proteins is required for assembly or stability of the complex.</text>
</comment>
<comment type="subcellular location">
    <subcellularLocation>
        <location evidence="1">Virion membrane</location>
        <topology evidence="1">Single-pass type II membrane protein</topology>
    </subcellularLocation>
    <text evidence="1">Component of the mature virion (MV) membrane. The mature virion is located in the cytoplasm of infected cells and is probably released by cell lysis.</text>
</comment>
<comment type="induction">
    <text evidence="1">Expressed in the late phase of the viral replicative cycle.</text>
</comment>
<comment type="PTM">
    <text evidence="1">Unglycosylated because produced in viral factories instead of the classic ER -Golgi route.</text>
</comment>
<comment type="similarity">
    <text evidence="4">Belongs to the orthopoxvirus OPG086 family.</text>
</comment>
<reference key="1">
    <citation type="journal article" date="1993" name="Nature">
        <title>Potential virulence determinants in terminal regions of variola smallpox virus genome.</title>
        <authorList>
            <person name="Massung R.F."/>
            <person name="Esposito J.J."/>
            <person name="Liu L.I."/>
            <person name="Qi J."/>
            <person name="Utterback T.R."/>
            <person name="Knight J.C."/>
            <person name="Aubin L."/>
            <person name="Yuran T.E."/>
            <person name="Parsons J.M."/>
            <person name="Loparev V.N."/>
            <person name="Selivanov N.A."/>
            <person name="Cavallaro K.F."/>
            <person name="Kerlavage A.R."/>
            <person name="Mahy B.W.J."/>
            <person name="Venter J.C."/>
        </authorList>
    </citation>
    <scope>NUCLEOTIDE SEQUENCE [GENOMIC DNA]</scope>
    <source>
        <strain>Bangladesh-1975</strain>
    </source>
</reference>
<reference key="2">
    <citation type="submission" date="1995-12" db="EMBL/GenBank/DDBJ databases">
        <authorList>
            <person name="Shchelkunov S.N."/>
            <person name="Sosnovtsev S.V."/>
            <person name="Totmenin A.V."/>
            <person name="Resenchuk S.M."/>
            <person name="Blinov V.M."/>
            <person name="Sandakhchiev L.S."/>
        </authorList>
    </citation>
    <scope>NUCLEOTIDE SEQUENCE [GENOMIC DNA]</scope>
    <source>
        <strain>Garcia-1966</strain>
    </source>
</reference>
<reference key="3">
    <citation type="journal article" date="2000" name="Virology">
        <title>Alastrim smallpox variola minor virus genome DNA sequences.</title>
        <authorList>
            <person name="Shchelkunov S.N."/>
            <person name="Totmenin A.V."/>
            <person name="Loparev V.N."/>
            <person name="Safronov P.F."/>
            <person name="Gutorov V.V."/>
            <person name="Chizhikov V.E."/>
            <person name="Knight J.C."/>
            <person name="Parsons J.M."/>
            <person name="Massung R.F."/>
            <person name="Esposito J.J."/>
        </authorList>
    </citation>
    <scope>NUCLEOTIDE SEQUENCE [LARGE SCALE GENOMIC DNA]</scope>
    <source>
        <strain>Garcia-1966</strain>
    </source>
</reference>
<gene>
    <name type="primary">OPG094</name>
    <name type="ORF">G9R</name>
    <name type="ORF">H9R</name>
    <name type="ORF">I10R</name>
</gene>
<protein>
    <recommendedName>
        <fullName>Entry-fusion complex protein OPG094</fullName>
        <shortName>EFC protein OPG094</shortName>
    </recommendedName>
    <alternativeName>
        <fullName>Myristoylated protein G9</fullName>
    </alternativeName>
</protein>
<sequence>MGGGVSVELPKRDPPPGVPTDEMLLNVDKMHDVIAPAKLLEYVHIGPLAKDKEDKVKKRYPEFRLVNTGPGGLSALLRQSYNGTAPNCCHTFNRTHYWKKDGKISDKYEEGAVLESCWPDVHDTGKCDVNLFDWCQGDTFDRNICHQWIGSAFNRSDRTVEGQQSLINLYNKMQTLCSKDASVPICESFLHHLRAHNTEDSKEMIDYILRQQSANFKQKYMRCSYPTRDKLEESLKYAEPRECWDPECSNANVNFLLTRNYNNLGLCNIVRCNTSVNNLQMDKTSSLRLSCGLSNSDRFSTVPVNRAKVVQHNIKHSFDLKLHLISLLSLLVIWILIVAI</sequence>
<name>PG094_VARV</name>